<name>EUTC_ECOSM</name>
<feature type="chain" id="PRO_1000130092" description="Ethanolamine ammonia-lyase small subunit">
    <location>
        <begin position="1"/>
        <end position="295"/>
    </location>
</feature>
<feature type="binding site" evidence="1">
    <location>
        <position position="207"/>
    </location>
    <ligand>
        <name>adenosylcob(III)alamin</name>
        <dbReference type="ChEBI" id="CHEBI:18408"/>
    </ligand>
</feature>
<feature type="binding site" evidence="1">
    <location>
        <position position="228"/>
    </location>
    <ligand>
        <name>adenosylcob(III)alamin</name>
        <dbReference type="ChEBI" id="CHEBI:18408"/>
    </ligand>
</feature>
<feature type="binding site" evidence="1">
    <location>
        <position position="258"/>
    </location>
    <ligand>
        <name>adenosylcob(III)alamin</name>
        <dbReference type="ChEBI" id="CHEBI:18408"/>
    </ligand>
</feature>
<comment type="function">
    <text evidence="1">Catalyzes the deamination of various vicinal amino-alcohols to oxo compounds. Allows this organism to utilize ethanolamine as the sole source of nitrogen and carbon in the presence of external vitamin B12.</text>
</comment>
<comment type="catalytic activity">
    <reaction evidence="1">
        <text>ethanolamine = acetaldehyde + NH4(+)</text>
        <dbReference type="Rhea" id="RHEA:15313"/>
        <dbReference type="ChEBI" id="CHEBI:15343"/>
        <dbReference type="ChEBI" id="CHEBI:28938"/>
        <dbReference type="ChEBI" id="CHEBI:57603"/>
        <dbReference type="EC" id="4.3.1.7"/>
    </reaction>
</comment>
<comment type="cofactor">
    <cofactor evidence="1">
        <name>adenosylcob(III)alamin</name>
        <dbReference type="ChEBI" id="CHEBI:18408"/>
    </cofactor>
    <text evidence="1">Binds between the large and small subunits.</text>
</comment>
<comment type="pathway">
    <text evidence="1">Amine and polyamine degradation; ethanolamine degradation.</text>
</comment>
<comment type="subunit">
    <text evidence="1">The basic unit is a heterodimer which dimerizes to form tetramers. The heterotetramers trimerize; 6 large subunits form a core ring with 6 small subunits projecting outwards.</text>
</comment>
<comment type="subcellular location">
    <subcellularLocation>
        <location evidence="1">Bacterial microcompartment</location>
    </subcellularLocation>
</comment>
<comment type="similarity">
    <text evidence="1">Belongs to the EutC family.</text>
</comment>
<sequence>MDQKQIEEIVRSVMASMGQAAPAPSEAKCATTTCTTPVTSESCALDLGSAEAKAWIGVENPHRADVLTELRRSTVARVCTGRAGPRPRTQALLRFLADHSRSKDTVLKEVPEEWVKAQGLLEVRSEISDKNLYLTRPDMGRRLCAEAVEALKAQCVANPDVQVVISDGLSTDAITVNYEEILPPLMAGLKQAGLKVGTPFFVRYGRVKIEDQIGEILGAKVVILLVGERPGLGQSESLSCYAVYSPRIATTVEADRTCISNIHQGGTPPVEAAAVIVDLAKRMLEQKASGINMTR</sequence>
<keyword id="KW-1283">Bacterial microcompartment</keyword>
<keyword id="KW-0846">Cobalamin</keyword>
<keyword id="KW-0170">Cobalt</keyword>
<keyword id="KW-0456">Lyase</keyword>
<accession>B1LMN4</accession>
<gene>
    <name evidence="1" type="primary">eutC</name>
    <name type="ordered locus">EcSMS35_2595</name>
</gene>
<proteinExistence type="inferred from homology"/>
<evidence type="ECO:0000255" key="1">
    <source>
        <dbReference type="HAMAP-Rule" id="MF_00601"/>
    </source>
</evidence>
<reference key="1">
    <citation type="journal article" date="2008" name="J. Bacteriol.">
        <title>Insights into the environmental resistance gene pool from the genome sequence of the multidrug-resistant environmental isolate Escherichia coli SMS-3-5.</title>
        <authorList>
            <person name="Fricke W.F."/>
            <person name="Wright M.S."/>
            <person name="Lindell A.H."/>
            <person name="Harkins D.M."/>
            <person name="Baker-Austin C."/>
            <person name="Ravel J."/>
            <person name="Stepanauskas R."/>
        </authorList>
    </citation>
    <scope>NUCLEOTIDE SEQUENCE [LARGE SCALE GENOMIC DNA]</scope>
    <source>
        <strain>SMS-3-5 / SECEC</strain>
    </source>
</reference>
<protein>
    <recommendedName>
        <fullName evidence="1">Ethanolamine ammonia-lyase small subunit</fullName>
        <shortName evidence="1">EAL small subunit</shortName>
        <ecNumber evidence="1">4.3.1.7</ecNumber>
    </recommendedName>
</protein>
<dbReference type="EC" id="4.3.1.7" evidence="1"/>
<dbReference type="EMBL" id="CP000970">
    <property type="protein sequence ID" value="ACB19081.1"/>
    <property type="molecule type" value="Genomic_DNA"/>
</dbReference>
<dbReference type="RefSeq" id="WP_000372327.1">
    <property type="nucleotide sequence ID" value="NC_010498.1"/>
</dbReference>
<dbReference type="SMR" id="B1LMN4"/>
<dbReference type="KEGG" id="ecm:EcSMS35_2595"/>
<dbReference type="HOGENOM" id="CLU_068224_0_0_6"/>
<dbReference type="UniPathway" id="UPA00560"/>
<dbReference type="Proteomes" id="UP000007011">
    <property type="component" value="Chromosome"/>
</dbReference>
<dbReference type="GO" id="GO:0009350">
    <property type="term" value="C:ethanolamine ammonia-lyase complex"/>
    <property type="evidence" value="ECO:0007669"/>
    <property type="project" value="UniProtKB-UniRule"/>
</dbReference>
<dbReference type="GO" id="GO:0031471">
    <property type="term" value="C:ethanolamine degradation polyhedral organelle"/>
    <property type="evidence" value="ECO:0007669"/>
    <property type="project" value="UniProtKB-UniRule"/>
</dbReference>
<dbReference type="GO" id="GO:0031419">
    <property type="term" value="F:cobalamin binding"/>
    <property type="evidence" value="ECO:0007669"/>
    <property type="project" value="UniProtKB-UniRule"/>
</dbReference>
<dbReference type="GO" id="GO:0008851">
    <property type="term" value="F:ethanolamine ammonia-lyase activity"/>
    <property type="evidence" value="ECO:0007669"/>
    <property type="project" value="UniProtKB-UniRule"/>
</dbReference>
<dbReference type="GO" id="GO:0006520">
    <property type="term" value="P:amino acid metabolic process"/>
    <property type="evidence" value="ECO:0007669"/>
    <property type="project" value="InterPro"/>
</dbReference>
<dbReference type="GO" id="GO:0046336">
    <property type="term" value="P:ethanolamine catabolic process"/>
    <property type="evidence" value="ECO:0007669"/>
    <property type="project" value="UniProtKB-UniRule"/>
</dbReference>
<dbReference type="FunFam" id="3.40.50.11240:FF:000001">
    <property type="entry name" value="Ethanolamine ammonia-lyase light chain"/>
    <property type="match status" value="1"/>
</dbReference>
<dbReference type="Gene3D" id="6.10.140.690">
    <property type="match status" value="1"/>
</dbReference>
<dbReference type="Gene3D" id="6.10.250.2060">
    <property type="match status" value="1"/>
</dbReference>
<dbReference type="Gene3D" id="3.40.50.11240">
    <property type="entry name" value="Ethanolamine ammonia-lyase light chain (EutC)"/>
    <property type="match status" value="1"/>
</dbReference>
<dbReference type="HAMAP" id="MF_00601">
    <property type="entry name" value="EutC"/>
    <property type="match status" value="1"/>
</dbReference>
<dbReference type="InterPro" id="IPR009246">
    <property type="entry name" value="EutC"/>
</dbReference>
<dbReference type="InterPro" id="IPR042251">
    <property type="entry name" value="EutC_C"/>
</dbReference>
<dbReference type="NCBIfam" id="NF003971">
    <property type="entry name" value="PRK05465.1"/>
    <property type="match status" value="1"/>
</dbReference>
<dbReference type="PANTHER" id="PTHR39330">
    <property type="entry name" value="ETHANOLAMINE AMMONIA-LYASE LIGHT CHAIN"/>
    <property type="match status" value="1"/>
</dbReference>
<dbReference type="PANTHER" id="PTHR39330:SF1">
    <property type="entry name" value="ETHANOLAMINE AMMONIA-LYASE SMALL SUBUNIT"/>
    <property type="match status" value="1"/>
</dbReference>
<dbReference type="Pfam" id="PF05985">
    <property type="entry name" value="EutC"/>
    <property type="match status" value="1"/>
</dbReference>
<dbReference type="PIRSF" id="PIRSF018982">
    <property type="entry name" value="EutC"/>
    <property type="match status" value="1"/>
</dbReference>
<organism>
    <name type="scientific">Escherichia coli (strain SMS-3-5 / SECEC)</name>
    <dbReference type="NCBI Taxonomy" id="439855"/>
    <lineage>
        <taxon>Bacteria</taxon>
        <taxon>Pseudomonadati</taxon>
        <taxon>Pseudomonadota</taxon>
        <taxon>Gammaproteobacteria</taxon>
        <taxon>Enterobacterales</taxon>
        <taxon>Enterobacteriaceae</taxon>
        <taxon>Escherichia</taxon>
    </lineage>
</organism>